<feature type="chain" id="PRO_0000244205" description="Large ribosomal subunit protein bL25">
    <location>
        <begin position="1"/>
        <end position="203"/>
    </location>
</feature>
<evidence type="ECO:0000255" key="1">
    <source>
        <dbReference type="HAMAP-Rule" id="MF_01334"/>
    </source>
</evidence>
<evidence type="ECO:0000305" key="2"/>
<reference key="1">
    <citation type="journal article" date="2009" name="BMC Genomics">
        <title>Metabolic analysis of the soil microbe Dechloromonas aromatica str. RCB: indications of a surprisingly complex life-style and cryptic anaerobic pathways for aromatic degradation.</title>
        <authorList>
            <person name="Salinero K.K."/>
            <person name="Keller K."/>
            <person name="Feil W.S."/>
            <person name="Feil H."/>
            <person name="Trong S."/>
            <person name="Di Bartolo G."/>
            <person name="Lapidus A."/>
        </authorList>
    </citation>
    <scope>NUCLEOTIDE SEQUENCE [LARGE SCALE GENOMIC DNA]</scope>
    <source>
        <strain>RCB</strain>
    </source>
</reference>
<organism>
    <name type="scientific">Dechloromonas aromatica (strain RCB)</name>
    <dbReference type="NCBI Taxonomy" id="159087"/>
    <lineage>
        <taxon>Bacteria</taxon>
        <taxon>Pseudomonadati</taxon>
        <taxon>Pseudomonadota</taxon>
        <taxon>Betaproteobacteria</taxon>
        <taxon>Rhodocyclales</taxon>
        <taxon>Azonexaceae</taxon>
        <taxon>Dechloromonas</taxon>
    </lineage>
</organism>
<protein>
    <recommendedName>
        <fullName evidence="1">Large ribosomal subunit protein bL25</fullName>
    </recommendedName>
    <alternativeName>
        <fullName evidence="2">50S ribosomal protein L25</fullName>
    </alternativeName>
    <alternativeName>
        <fullName evidence="1">General stress protein CTC</fullName>
    </alternativeName>
</protein>
<proteinExistence type="inferred from homology"/>
<dbReference type="EMBL" id="CP000089">
    <property type="protein sequence ID" value="AAZ48460.1"/>
    <property type="molecule type" value="Genomic_DNA"/>
</dbReference>
<dbReference type="SMR" id="Q479M1"/>
<dbReference type="STRING" id="159087.Daro_3731"/>
<dbReference type="KEGG" id="dar:Daro_3731"/>
<dbReference type="eggNOG" id="COG1825">
    <property type="taxonomic scope" value="Bacteria"/>
</dbReference>
<dbReference type="HOGENOM" id="CLU_075939_0_1_4"/>
<dbReference type="OrthoDB" id="9806411at2"/>
<dbReference type="GO" id="GO:0022625">
    <property type="term" value="C:cytosolic large ribosomal subunit"/>
    <property type="evidence" value="ECO:0007669"/>
    <property type="project" value="TreeGrafter"/>
</dbReference>
<dbReference type="GO" id="GO:0008097">
    <property type="term" value="F:5S rRNA binding"/>
    <property type="evidence" value="ECO:0007669"/>
    <property type="project" value="InterPro"/>
</dbReference>
<dbReference type="GO" id="GO:0003735">
    <property type="term" value="F:structural constituent of ribosome"/>
    <property type="evidence" value="ECO:0007669"/>
    <property type="project" value="InterPro"/>
</dbReference>
<dbReference type="GO" id="GO:0006412">
    <property type="term" value="P:translation"/>
    <property type="evidence" value="ECO:0007669"/>
    <property type="project" value="UniProtKB-UniRule"/>
</dbReference>
<dbReference type="CDD" id="cd00495">
    <property type="entry name" value="Ribosomal_L25_TL5_CTC"/>
    <property type="match status" value="1"/>
</dbReference>
<dbReference type="FunFam" id="2.40.240.10:FF:000002">
    <property type="entry name" value="50S ribosomal protein L25"/>
    <property type="match status" value="1"/>
</dbReference>
<dbReference type="Gene3D" id="2.170.120.20">
    <property type="entry name" value="Ribosomal protein L25, beta domain"/>
    <property type="match status" value="1"/>
</dbReference>
<dbReference type="Gene3D" id="2.40.240.10">
    <property type="entry name" value="Ribosomal Protein L25, Chain P"/>
    <property type="match status" value="1"/>
</dbReference>
<dbReference type="HAMAP" id="MF_01336">
    <property type="entry name" value="Ribosomal_bL25"/>
    <property type="match status" value="1"/>
</dbReference>
<dbReference type="HAMAP" id="MF_01334">
    <property type="entry name" value="Ribosomal_bL25_CTC"/>
    <property type="match status" value="1"/>
</dbReference>
<dbReference type="InterPro" id="IPR020056">
    <property type="entry name" value="Rbsml_bL25/Gln-tRNA_synth_N"/>
</dbReference>
<dbReference type="InterPro" id="IPR011035">
    <property type="entry name" value="Ribosomal_bL25/Gln-tRNA_synth"/>
</dbReference>
<dbReference type="InterPro" id="IPR020057">
    <property type="entry name" value="Ribosomal_bL25_b-dom"/>
</dbReference>
<dbReference type="InterPro" id="IPR037121">
    <property type="entry name" value="Ribosomal_bL25_C"/>
</dbReference>
<dbReference type="InterPro" id="IPR001021">
    <property type="entry name" value="Ribosomal_bL25_long"/>
</dbReference>
<dbReference type="InterPro" id="IPR020055">
    <property type="entry name" value="Ribosomal_bL25_short"/>
</dbReference>
<dbReference type="InterPro" id="IPR029751">
    <property type="entry name" value="Ribosomal_L25_dom"/>
</dbReference>
<dbReference type="InterPro" id="IPR020930">
    <property type="entry name" value="Ribosomal_uL5_bac-type"/>
</dbReference>
<dbReference type="NCBIfam" id="TIGR00731">
    <property type="entry name" value="bL25_bact_ctc"/>
    <property type="match status" value="1"/>
</dbReference>
<dbReference type="NCBIfam" id="NF004128">
    <property type="entry name" value="PRK05618.1-2"/>
    <property type="match status" value="1"/>
</dbReference>
<dbReference type="NCBIfam" id="NF004130">
    <property type="entry name" value="PRK05618.1-5"/>
    <property type="match status" value="1"/>
</dbReference>
<dbReference type="NCBIfam" id="NF004612">
    <property type="entry name" value="PRK05943.1"/>
    <property type="match status" value="1"/>
</dbReference>
<dbReference type="PANTHER" id="PTHR33284">
    <property type="entry name" value="RIBOSOMAL PROTEIN L25/GLN-TRNA SYNTHETASE, ANTI-CODON-BINDING DOMAIN-CONTAINING PROTEIN"/>
    <property type="match status" value="1"/>
</dbReference>
<dbReference type="PANTHER" id="PTHR33284:SF1">
    <property type="entry name" value="RIBOSOMAL PROTEIN L25_GLN-TRNA SYNTHETASE, ANTI-CODON-BINDING DOMAIN-CONTAINING PROTEIN"/>
    <property type="match status" value="1"/>
</dbReference>
<dbReference type="Pfam" id="PF01386">
    <property type="entry name" value="Ribosomal_L25p"/>
    <property type="match status" value="1"/>
</dbReference>
<dbReference type="Pfam" id="PF14693">
    <property type="entry name" value="Ribosomal_TL5_C"/>
    <property type="match status" value="1"/>
</dbReference>
<dbReference type="SUPFAM" id="SSF50715">
    <property type="entry name" value="Ribosomal protein L25-like"/>
    <property type="match status" value="1"/>
</dbReference>
<keyword id="KW-0687">Ribonucleoprotein</keyword>
<keyword id="KW-0689">Ribosomal protein</keyword>
<keyword id="KW-0694">RNA-binding</keyword>
<keyword id="KW-0699">rRNA-binding</keyword>
<name>RL25_DECAR</name>
<gene>
    <name evidence="1" type="primary">rplY</name>
    <name evidence="1" type="synonym">ctc</name>
    <name type="ordered locus">Daro_3731</name>
</gene>
<comment type="function">
    <text evidence="1">This is one of the proteins that binds to the 5S RNA in the ribosome where it forms part of the central protuberance.</text>
</comment>
<comment type="subunit">
    <text evidence="1">Part of the 50S ribosomal subunit; part of the 5S rRNA/L5/L18/L25 subcomplex. Contacts the 5S rRNA. Binds to the 5S rRNA independently of L5 and L18.</text>
</comment>
<comment type="similarity">
    <text evidence="1">Belongs to the bacterial ribosomal protein bL25 family. CTC subfamily.</text>
</comment>
<accession>Q479M1</accession>
<sequence>MQFELNAQARTLQGTGASRRLRHAAKVPGIVYGGAAAPQSIEVDHNDLLLKLKKEAFHSSIINLIIDGKKEQVLLRDTQVHAYKPLVLHVDFQRVDATHELHVKVPLHFVNEEVAPGVKLNGGLVNHVMTEVDIQCLAGDLPEFIEVDLSSLKIGGSIHLSQLKLPKGVKIVHHTADDSVVVGIVGKGGASEEAAEGEAAAAE</sequence>